<keyword id="KW-0067">ATP-binding</keyword>
<keyword id="KW-1003">Cell membrane</keyword>
<keyword id="KW-0406">Ion transport</keyword>
<keyword id="KW-0472">Membrane</keyword>
<keyword id="KW-0533">Nickel</keyword>
<keyword id="KW-0921">Nickel transport</keyword>
<keyword id="KW-0547">Nucleotide-binding</keyword>
<keyword id="KW-1278">Translocase</keyword>
<keyword id="KW-0813">Transport</keyword>
<dbReference type="EC" id="7.2.2.11" evidence="1"/>
<dbReference type="EMBL" id="BA000033">
    <property type="protein sequence ID" value="BAB95133.1"/>
    <property type="molecule type" value="Genomic_DNA"/>
</dbReference>
<dbReference type="RefSeq" id="WP_000052319.1">
    <property type="nucleotide sequence ID" value="NC_003923.1"/>
</dbReference>
<dbReference type="SMR" id="Q8NWT5"/>
<dbReference type="KEGG" id="sam:MW1268"/>
<dbReference type="HOGENOM" id="CLU_000604_1_23_9"/>
<dbReference type="GO" id="GO:0005886">
    <property type="term" value="C:plasma membrane"/>
    <property type="evidence" value="ECO:0007669"/>
    <property type="project" value="UniProtKB-SubCell"/>
</dbReference>
<dbReference type="GO" id="GO:0015413">
    <property type="term" value="F:ABC-type nickel transporter activity"/>
    <property type="evidence" value="ECO:0007669"/>
    <property type="project" value="UniProtKB-EC"/>
</dbReference>
<dbReference type="GO" id="GO:0005524">
    <property type="term" value="F:ATP binding"/>
    <property type="evidence" value="ECO:0007669"/>
    <property type="project" value="UniProtKB-KW"/>
</dbReference>
<dbReference type="GO" id="GO:0016887">
    <property type="term" value="F:ATP hydrolysis activity"/>
    <property type="evidence" value="ECO:0007669"/>
    <property type="project" value="InterPro"/>
</dbReference>
<dbReference type="FunFam" id="3.40.50.300:FF:001826">
    <property type="entry name" value="Nickel import system ATP-binding protein NikD"/>
    <property type="match status" value="1"/>
</dbReference>
<dbReference type="Gene3D" id="3.40.50.300">
    <property type="entry name" value="P-loop containing nucleotide triphosphate hydrolases"/>
    <property type="match status" value="1"/>
</dbReference>
<dbReference type="InterPro" id="IPR003593">
    <property type="entry name" value="AAA+_ATPase"/>
</dbReference>
<dbReference type="InterPro" id="IPR050388">
    <property type="entry name" value="ABC_Ni/Peptide_Import"/>
</dbReference>
<dbReference type="InterPro" id="IPR003439">
    <property type="entry name" value="ABC_transporter-like_ATP-bd"/>
</dbReference>
<dbReference type="InterPro" id="IPR027417">
    <property type="entry name" value="P-loop_NTPase"/>
</dbReference>
<dbReference type="PANTHER" id="PTHR43297:SF13">
    <property type="entry name" value="NICKEL ABC TRANSPORTER, ATP-BINDING PROTEIN"/>
    <property type="match status" value="1"/>
</dbReference>
<dbReference type="PANTHER" id="PTHR43297">
    <property type="entry name" value="OLIGOPEPTIDE TRANSPORT ATP-BINDING PROTEIN APPD"/>
    <property type="match status" value="1"/>
</dbReference>
<dbReference type="Pfam" id="PF00005">
    <property type="entry name" value="ABC_tran"/>
    <property type="match status" value="1"/>
</dbReference>
<dbReference type="SMART" id="SM00382">
    <property type="entry name" value="AAA"/>
    <property type="match status" value="1"/>
</dbReference>
<dbReference type="SUPFAM" id="SSF52540">
    <property type="entry name" value="P-loop containing nucleoside triphosphate hydrolases"/>
    <property type="match status" value="1"/>
</dbReference>
<dbReference type="PROSITE" id="PS50893">
    <property type="entry name" value="ABC_TRANSPORTER_2"/>
    <property type="match status" value="1"/>
</dbReference>
<reference key="1">
    <citation type="journal article" date="2002" name="Lancet">
        <title>Genome and virulence determinants of high virulence community-acquired MRSA.</title>
        <authorList>
            <person name="Baba T."/>
            <person name="Takeuchi F."/>
            <person name="Kuroda M."/>
            <person name="Yuzawa H."/>
            <person name="Aoki K."/>
            <person name="Oguchi A."/>
            <person name="Nagai Y."/>
            <person name="Iwama N."/>
            <person name="Asano K."/>
            <person name="Naimi T."/>
            <person name="Kuroda H."/>
            <person name="Cui L."/>
            <person name="Yamamoto K."/>
            <person name="Hiramatsu K."/>
        </authorList>
    </citation>
    <scope>NUCLEOTIDE SEQUENCE [LARGE SCALE GENOMIC DNA]</scope>
    <source>
        <strain>MW2</strain>
    </source>
</reference>
<protein>
    <recommendedName>
        <fullName evidence="1">Nickel import system ATP-binding protein NikD</fullName>
        <ecNumber evidence="1">7.2.2.11</ecNumber>
    </recommendedName>
</protein>
<gene>
    <name evidence="1" type="primary">nikD</name>
    <name type="synonym">oppD2</name>
    <name type="ordered locus">MW1268</name>
</gene>
<proteinExistence type="inferred from homology"/>
<organism>
    <name type="scientific">Staphylococcus aureus (strain MW2)</name>
    <dbReference type="NCBI Taxonomy" id="196620"/>
    <lineage>
        <taxon>Bacteria</taxon>
        <taxon>Bacillati</taxon>
        <taxon>Bacillota</taxon>
        <taxon>Bacilli</taxon>
        <taxon>Bacillales</taxon>
        <taxon>Staphylococcaceae</taxon>
        <taxon>Staphylococcus</taxon>
    </lineage>
</organism>
<accession>Q8NWT5</accession>
<sequence length="257" mass="29517">MSLIDIQNLTIKNTSEKSLIKGIDLKIFSQQINALIGESGAGKSLIAKALLEYLPFDLSCTYDSYQFDGENVSRLSQYYGHTIGYISQNYAESFNDHTKLGKQLTAIYRKHYKGSKEEALSKVDKALSWVNLQSKDILNKYSFQLSGGQLERVYIASVLVLEPKLIIADEPVASLDALNGNQVMDLLQHIVLEHGQTLFIITHNLSHVLKYCQYIYVLKEGQIIERGNINHFKYEHLHPYTERLIKYRTQLKRDYYD</sequence>
<feature type="chain" id="PRO_0000276797" description="Nickel import system ATP-binding protein NikD">
    <location>
        <begin position="1"/>
        <end position="257"/>
    </location>
</feature>
<feature type="domain" description="ABC transporter" evidence="2">
    <location>
        <begin position="4"/>
        <end position="245"/>
    </location>
</feature>
<feature type="binding site" evidence="2">
    <location>
        <begin position="37"/>
        <end position="44"/>
    </location>
    <ligand>
        <name>ATP</name>
        <dbReference type="ChEBI" id="CHEBI:30616"/>
    </ligand>
</feature>
<evidence type="ECO:0000250" key="1">
    <source>
        <dbReference type="UniProtKB" id="Q2FYQ7"/>
    </source>
</evidence>
<evidence type="ECO:0000255" key="2">
    <source>
        <dbReference type="PROSITE-ProRule" id="PRU00434"/>
    </source>
</evidence>
<evidence type="ECO:0000305" key="3"/>
<name>NIKD_STAAW</name>
<comment type="function">
    <text evidence="1">Part of the ABC transporter complex NikABCDE (Opp2) involved in nickel import. Probably responsible for energy coupling to the transport system.</text>
</comment>
<comment type="catalytic activity">
    <reaction evidence="1">
        <text>Ni(2+)(out) + ATP + H2O = Ni(2+)(in) + ADP + phosphate + H(+)</text>
        <dbReference type="Rhea" id="RHEA:15557"/>
        <dbReference type="ChEBI" id="CHEBI:15377"/>
        <dbReference type="ChEBI" id="CHEBI:15378"/>
        <dbReference type="ChEBI" id="CHEBI:30616"/>
        <dbReference type="ChEBI" id="CHEBI:43474"/>
        <dbReference type="ChEBI" id="CHEBI:49786"/>
        <dbReference type="ChEBI" id="CHEBI:456216"/>
        <dbReference type="EC" id="7.2.2.11"/>
    </reaction>
    <physiologicalReaction direction="left-to-right" evidence="1">
        <dbReference type="Rhea" id="RHEA:15558"/>
    </physiologicalReaction>
</comment>
<comment type="subunit">
    <text evidence="1">The complex is composed of two ATP-binding proteins (NikD and NikE), two transmembrane proteins (NikB and NikC) and a solute-binding protein (NikA).</text>
</comment>
<comment type="subcellular location">
    <subcellularLocation>
        <location evidence="3">Cell membrane</location>
        <topology evidence="3">Peripheral membrane protein</topology>
    </subcellularLocation>
</comment>
<comment type="similarity">
    <text evidence="3">Belongs to the ABC transporter superfamily.</text>
</comment>